<name>IPP2_HUMAN</name>
<accession>P41236</accession>
<organism>
    <name type="scientific">Homo sapiens</name>
    <name type="common">Human</name>
    <dbReference type="NCBI Taxonomy" id="9606"/>
    <lineage>
        <taxon>Eukaryota</taxon>
        <taxon>Metazoa</taxon>
        <taxon>Chordata</taxon>
        <taxon>Craniata</taxon>
        <taxon>Vertebrata</taxon>
        <taxon>Euteleostomi</taxon>
        <taxon>Mammalia</taxon>
        <taxon>Eutheria</taxon>
        <taxon>Euarchontoglires</taxon>
        <taxon>Primates</taxon>
        <taxon>Haplorrhini</taxon>
        <taxon>Catarrhini</taxon>
        <taxon>Hominidae</taxon>
        <taxon>Homo</taxon>
    </lineage>
</organism>
<comment type="function">
    <text>Inhibitor of protein-phosphatase 1.</text>
</comment>
<comment type="subunit">
    <text evidence="6">Heterodimer with PP1.</text>
</comment>
<comment type="interaction">
    <interactant intactId="EBI-1056517">
        <id>P41236</id>
    </interactant>
    <interactant intactId="EBI-77613">
        <id>P05067</id>
        <label>APP</label>
    </interactant>
    <organismsDiffer>false</organismsDiffer>
    <experiments>3</experiments>
</comment>
<comment type="interaction">
    <interactant intactId="EBI-1056517">
        <id>P41236</id>
    </interactant>
    <interactant intactId="EBI-2008933">
        <id>Q8IWU2</id>
        <label>LMTK2</label>
    </interactant>
    <organismsDiffer>false</organismsDiffer>
    <experiments>4</experiments>
</comment>
<comment type="interaction">
    <interactant intactId="EBI-1056517">
        <id>P41236</id>
    </interactant>
    <interactant intactId="EBI-357253">
        <id>P62136</id>
        <label>PPP1CA</label>
    </interactant>
    <organismsDiffer>false</organismsDiffer>
    <experiments>12</experiments>
</comment>
<comment type="interaction">
    <interactant intactId="EBI-1056517">
        <id>P41236</id>
    </interactant>
    <interactant intactId="EBI-356283">
        <id>P36873</id>
        <label>PPP1CC</label>
    </interactant>
    <organismsDiffer>false</organismsDiffer>
    <experiments>10</experiments>
</comment>
<comment type="interaction">
    <interactant intactId="EBI-1056517">
        <id>P41236</id>
    </interactant>
    <interactant intactId="EBI-717399">
        <id>Q9BSI4</id>
        <label>TINF2</label>
    </interactant>
    <organismsDiffer>false</organismsDiffer>
    <experiments>2</experiments>
</comment>
<comment type="PTM">
    <text evidence="1 6 7">Phosphorylation on Thr-73 by GSK3 activates PP1 by dissociating the PP1-PPP1R2 complex (By similarity). Phosphorylation on Ser-44 by ATM activates PP1 by dissociating the PP1-PPP1R2 complex.</text>
</comment>
<comment type="similarity">
    <text evidence="8">Belongs to the protein phosphatase inhibitor 2 family.</text>
</comment>
<proteinExistence type="evidence at protein level"/>
<gene>
    <name type="primary">PPP1R2</name>
    <name type="synonym">IPP2</name>
</gene>
<evidence type="ECO:0000250" key="1"/>
<evidence type="ECO:0000250" key="2">
    <source>
        <dbReference type="UniProtKB" id="P11845"/>
    </source>
</evidence>
<evidence type="ECO:0000250" key="3">
    <source>
        <dbReference type="UniProtKB" id="Q9DCL8"/>
    </source>
</evidence>
<evidence type="ECO:0000256" key="4">
    <source>
        <dbReference type="SAM" id="MobiDB-lite"/>
    </source>
</evidence>
<evidence type="ECO:0000269" key="5">
    <source>
    </source>
</evidence>
<evidence type="ECO:0000269" key="6">
    <source>
    </source>
</evidence>
<evidence type="ECO:0000269" key="7">
    <source>
    </source>
</evidence>
<evidence type="ECO:0000305" key="8"/>
<evidence type="ECO:0007744" key="9">
    <source>
    </source>
</evidence>
<evidence type="ECO:0007744" key="10">
    <source>
    </source>
</evidence>
<evidence type="ECO:0007744" key="11">
    <source>
    </source>
</evidence>
<dbReference type="EMBL" id="X78873">
    <property type="protein sequence ID" value="CAA55475.1"/>
    <property type="molecule type" value="mRNA"/>
</dbReference>
<dbReference type="EMBL" id="Z29646">
    <property type="protein sequence ID" value="CAA82754.1"/>
    <property type="molecule type" value="mRNA"/>
</dbReference>
<dbReference type="EMBL" id="U68111">
    <property type="protein sequence ID" value="AAC51206.1"/>
    <property type="molecule type" value="Genomic_DNA"/>
</dbReference>
<dbReference type="EMBL" id="U68106">
    <property type="protein sequence ID" value="AAC51206.1"/>
    <property type="status" value="JOINED"/>
    <property type="molecule type" value="Genomic_DNA"/>
</dbReference>
<dbReference type="EMBL" id="U68107">
    <property type="protein sequence ID" value="AAC51206.1"/>
    <property type="status" value="JOINED"/>
    <property type="molecule type" value="Genomic_DNA"/>
</dbReference>
<dbReference type="EMBL" id="U68108">
    <property type="protein sequence ID" value="AAC51206.1"/>
    <property type="status" value="JOINED"/>
    <property type="molecule type" value="Genomic_DNA"/>
</dbReference>
<dbReference type="EMBL" id="U68109">
    <property type="protein sequence ID" value="AAC51206.1"/>
    <property type="status" value="JOINED"/>
    <property type="molecule type" value="Genomic_DNA"/>
</dbReference>
<dbReference type="EMBL" id="U68110">
    <property type="protein sequence ID" value="AAC51206.1"/>
    <property type="status" value="JOINED"/>
    <property type="molecule type" value="Genomic_DNA"/>
</dbReference>
<dbReference type="EMBL" id="AJ133812">
    <property type="protein sequence ID" value="CAB41680.1"/>
    <property type="molecule type" value="mRNA"/>
</dbReference>
<dbReference type="EMBL" id="AY063767">
    <property type="protein sequence ID" value="AAL48322.1"/>
    <property type="molecule type" value="mRNA"/>
</dbReference>
<dbReference type="EMBL" id="BC007655">
    <property type="protein sequence ID" value="AAH07655.1"/>
    <property type="molecule type" value="mRNA"/>
</dbReference>
<dbReference type="CCDS" id="CCDS3309.1"/>
<dbReference type="PIR" id="S42406">
    <property type="entry name" value="S42406"/>
</dbReference>
<dbReference type="RefSeq" id="NP_001303254.1">
    <property type="nucleotide sequence ID" value="NM_001316325.1"/>
</dbReference>
<dbReference type="RefSeq" id="NP_006232.1">
    <property type="nucleotide sequence ID" value="NM_006241.8"/>
</dbReference>
<dbReference type="BMRB" id="P41236"/>
<dbReference type="SMR" id="P41236"/>
<dbReference type="BioGRID" id="111497">
    <property type="interactions" value="75"/>
</dbReference>
<dbReference type="DIP" id="DIP-781N"/>
<dbReference type="ELM" id="P41236"/>
<dbReference type="FunCoup" id="P41236">
    <property type="interactions" value="1244"/>
</dbReference>
<dbReference type="IntAct" id="P41236">
    <property type="interactions" value="21"/>
</dbReference>
<dbReference type="MINT" id="P41236"/>
<dbReference type="STRING" id="9606.ENSP00000484580"/>
<dbReference type="GlyGen" id="P41236">
    <property type="glycosylation" value="6 sites, 1 O-linked glycan (5 sites)"/>
</dbReference>
<dbReference type="iPTMnet" id="P41236"/>
<dbReference type="MetOSite" id="P41236"/>
<dbReference type="PhosphoSitePlus" id="P41236"/>
<dbReference type="BioMuta" id="PPP1R2"/>
<dbReference type="DMDM" id="729856"/>
<dbReference type="jPOST" id="P41236"/>
<dbReference type="MassIVE" id="P41236"/>
<dbReference type="PaxDb" id="9606-ENSP00000484580"/>
<dbReference type="PeptideAtlas" id="P41236"/>
<dbReference type="ProteomicsDB" id="55448"/>
<dbReference type="Pumba" id="P41236"/>
<dbReference type="TopDownProteomics" id="P41236"/>
<dbReference type="Antibodypedia" id="33909">
    <property type="antibodies" value="334 antibodies from 29 providers"/>
</dbReference>
<dbReference type="DNASU" id="5504"/>
<dbReference type="Ensembl" id="ENST00000618156.5">
    <property type="protein sequence ID" value="ENSP00000484580.1"/>
    <property type="gene ID" value="ENSG00000184203.8"/>
</dbReference>
<dbReference type="GeneID" id="5504"/>
<dbReference type="KEGG" id="hsa:5504"/>
<dbReference type="MANE-Select" id="ENST00000618156.5">
    <property type="protein sequence ID" value="ENSP00000484580.1"/>
    <property type="RefSeq nucleotide sequence ID" value="NM_006241.8"/>
    <property type="RefSeq protein sequence ID" value="NP_006232.1"/>
</dbReference>
<dbReference type="UCSC" id="uc032sob.2">
    <property type="organism name" value="human"/>
</dbReference>
<dbReference type="AGR" id="HGNC:9288"/>
<dbReference type="CTD" id="5504"/>
<dbReference type="DisGeNET" id="5504"/>
<dbReference type="GeneCards" id="PPP1R2"/>
<dbReference type="HGNC" id="HGNC:9288">
    <property type="gene designation" value="PPP1R2"/>
</dbReference>
<dbReference type="HPA" id="ENSG00000184203">
    <property type="expression patterns" value="Low tissue specificity"/>
</dbReference>
<dbReference type="MIM" id="601792">
    <property type="type" value="gene"/>
</dbReference>
<dbReference type="neXtProt" id="NX_P41236"/>
<dbReference type="OpenTargets" id="ENSG00000184203"/>
<dbReference type="PharmGKB" id="PA33641"/>
<dbReference type="VEuPathDB" id="HostDB:ENSG00000184203"/>
<dbReference type="eggNOG" id="KOG4041">
    <property type="taxonomic scope" value="Eukaryota"/>
</dbReference>
<dbReference type="GeneTree" id="ENSGT00390000004757"/>
<dbReference type="InParanoid" id="P41236"/>
<dbReference type="OMA" id="RAHYNEG"/>
<dbReference type="OrthoDB" id="551302at2759"/>
<dbReference type="PAN-GO" id="P41236">
    <property type="GO annotations" value="2 GO annotations based on evolutionary models"/>
</dbReference>
<dbReference type="PhylomeDB" id="P41236"/>
<dbReference type="TreeFam" id="TF105536"/>
<dbReference type="PathwayCommons" id="P41236"/>
<dbReference type="SignaLink" id="P41236"/>
<dbReference type="SIGNOR" id="P41236"/>
<dbReference type="BioGRID-ORCS" id="5504">
    <property type="hits" value="632 hits in 1129 CRISPR screens"/>
</dbReference>
<dbReference type="CD-CODE" id="8C2F96ED">
    <property type="entry name" value="Centrosome"/>
</dbReference>
<dbReference type="ChiTaRS" id="PPP1R2">
    <property type="organism name" value="human"/>
</dbReference>
<dbReference type="GeneWiki" id="PPP1R2"/>
<dbReference type="GenomeRNAi" id="5504"/>
<dbReference type="Pharos" id="P41236">
    <property type="development level" value="Tbio"/>
</dbReference>
<dbReference type="PRO" id="PR:P41236"/>
<dbReference type="Proteomes" id="UP000005640">
    <property type="component" value="Chromosome 3"/>
</dbReference>
<dbReference type="RNAct" id="P41236">
    <property type="molecule type" value="protein"/>
</dbReference>
<dbReference type="Bgee" id="ENSG00000184203">
    <property type="expression patterns" value="Expressed in biceps brachii and 204 other cell types or tissues"/>
</dbReference>
<dbReference type="ExpressionAtlas" id="P41236">
    <property type="expression patterns" value="baseline and differential"/>
</dbReference>
<dbReference type="GO" id="GO:0140678">
    <property type="term" value="F:molecular function inhibitor activity"/>
    <property type="evidence" value="ECO:0000269"/>
    <property type="project" value="DisProt"/>
</dbReference>
<dbReference type="GO" id="GO:0004864">
    <property type="term" value="F:protein phosphatase inhibitor activity"/>
    <property type="evidence" value="ECO:0000318"/>
    <property type="project" value="GO_Central"/>
</dbReference>
<dbReference type="GO" id="GO:0004865">
    <property type="term" value="F:protein serine/threonine phosphatase inhibitor activity"/>
    <property type="evidence" value="ECO:0000304"/>
    <property type="project" value="ProtInc"/>
</dbReference>
<dbReference type="GO" id="GO:0006091">
    <property type="term" value="P:generation of precursor metabolites and energy"/>
    <property type="evidence" value="ECO:0000304"/>
    <property type="project" value="ProtInc"/>
</dbReference>
<dbReference type="GO" id="GO:0005977">
    <property type="term" value="P:glycogen metabolic process"/>
    <property type="evidence" value="ECO:0007669"/>
    <property type="project" value="UniProtKB-KW"/>
</dbReference>
<dbReference type="GO" id="GO:0035556">
    <property type="term" value="P:intracellular signal transduction"/>
    <property type="evidence" value="ECO:0000318"/>
    <property type="project" value="GO_Central"/>
</dbReference>
<dbReference type="GO" id="GO:0009966">
    <property type="term" value="P:regulation of signal transduction"/>
    <property type="evidence" value="ECO:0007669"/>
    <property type="project" value="InterPro"/>
</dbReference>
<dbReference type="DisProt" id="DP00816"/>
<dbReference type="Gene3D" id="6.10.250.1050">
    <property type="match status" value="2"/>
</dbReference>
<dbReference type="InterPro" id="IPR007062">
    <property type="entry name" value="PPI-2"/>
</dbReference>
<dbReference type="PANTHER" id="PTHR12398">
    <property type="entry name" value="PROTEIN PHOSPHATASE INHIBITOR"/>
    <property type="match status" value="1"/>
</dbReference>
<dbReference type="PANTHER" id="PTHR12398:SF35">
    <property type="entry name" value="PROTEIN PHOSPHATASE INHIBITOR 2-RELATED"/>
    <property type="match status" value="1"/>
</dbReference>
<dbReference type="Pfam" id="PF04979">
    <property type="entry name" value="IPP-2"/>
    <property type="match status" value="1"/>
</dbReference>
<keyword id="KW-0007">Acetylation</keyword>
<keyword id="KW-0119">Carbohydrate metabolism</keyword>
<keyword id="KW-0903">Direct protein sequencing</keyword>
<keyword id="KW-0321">Glycogen metabolism</keyword>
<keyword id="KW-0597">Phosphoprotein</keyword>
<keyword id="KW-0650">Protein phosphatase inhibitor</keyword>
<keyword id="KW-1267">Proteomics identification</keyword>
<keyword id="KW-1185">Reference proteome</keyword>
<protein>
    <recommendedName>
        <fullName>Protein phosphatase inhibitor 2</fullName>
        <shortName>IPP-2</shortName>
    </recommendedName>
</protein>
<feature type="initiator methionine" description="Removed" evidence="2 5">
    <location>
        <position position="1"/>
    </location>
</feature>
<feature type="chain" id="PRO_0000071481" description="Protein phosphatase inhibitor 2">
    <location>
        <begin position="2"/>
        <end position="205"/>
    </location>
</feature>
<feature type="region of interest" description="Disordered" evidence="4">
    <location>
        <begin position="1"/>
        <end position="44"/>
    </location>
</feature>
<feature type="region of interest" description="Required for binding PPP1CC" evidence="1">
    <location>
        <begin position="12"/>
        <end position="17"/>
    </location>
</feature>
<feature type="region of interest" description="Required for binding PPP1CC" evidence="1">
    <location>
        <begin position="43"/>
        <end position="55"/>
    </location>
</feature>
<feature type="region of interest" description="Disordered" evidence="4">
    <location>
        <begin position="111"/>
        <end position="142"/>
    </location>
</feature>
<feature type="region of interest" description="Required for binding PPP1CC catalytic center, displacing metal ions and inhibition of PPP1CC catalytic activity" evidence="1">
    <location>
        <begin position="147"/>
        <end position="150"/>
    </location>
</feature>
<feature type="region of interest" description="Disordered" evidence="4">
    <location>
        <begin position="163"/>
        <end position="205"/>
    </location>
</feature>
<feature type="compositionally biased region" description="Polar residues" evidence="4">
    <location>
        <begin position="17"/>
        <end position="26"/>
    </location>
</feature>
<feature type="compositionally biased region" description="Basic and acidic residues" evidence="4">
    <location>
        <begin position="35"/>
        <end position="44"/>
    </location>
</feature>
<feature type="compositionally biased region" description="Acidic residues" evidence="4">
    <location>
        <begin position="121"/>
        <end position="130"/>
    </location>
</feature>
<feature type="compositionally biased region" description="Basic and acidic residues" evidence="4">
    <location>
        <begin position="131"/>
        <end position="142"/>
    </location>
</feature>
<feature type="compositionally biased region" description="Acidic residues" evidence="4">
    <location>
        <begin position="167"/>
        <end position="179"/>
    </location>
</feature>
<feature type="compositionally biased region" description="Polar residues" evidence="4">
    <location>
        <begin position="182"/>
        <end position="205"/>
    </location>
</feature>
<feature type="modified residue" description="N-acetylalanine" evidence="2">
    <location>
        <position position="2"/>
    </location>
</feature>
<feature type="modified residue" description="Phosphoserine; by ATM" evidence="6">
    <location>
        <position position="44"/>
    </location>
</feature>
<feature type="modified residue" description="Phosphothreonine; by GSK3" evidence="2">
    <location>
        <position position="73"/>
    </location>
</feature>
<feature type="modified residue" description="Phosphoserine" evidence="10 11">
    <location>
        <position position="87"/>
    </location>
</feature>
<feature type="modified residue" description="Phosphothreonine" evidence="10">
    <location>
        <position position="89"/>
    </location>
</feature>
<feature type="modified residue" description="Phosphothreonine" evidence="9">
    <location>
        <position position="92"/>
    </location>
</feature>
<feature type="modified residue" description="Phosphoserine" evidence="7">
    <location>
        <position position="121"/>
    </location>
</feature>
<feature type="modified residue" description="Phosphoserine" evidence="7">
    <location>
        <position position="122"/>
    </location>
</feature>
<feature type="modified residue" description="Phosphoserine" evidence="7">
    <location>
        <position position="127"/>
    </location>
</feature>
<feature type="modified residue" description="Phosphoserine" evidence="3">
    <location>
        <position position="130"/>
    </location>
</feature>
<sequence length="205" mass="23015">MAASTASHRPIKGILKNKTSTTSSMVASAEQPRGNVDEELSKKSQKWDEMNILATYHPADKDYGLMKIDEPSTPYHSMMGDDEDACSDTEATEAMAPDILARKLAAAEGLEPKYRIQEQESSGEEDSDLSPEEREKKRQFEMKRKLHYNEGLNIKLARQLISKDLHDDDEDEEMLETADGESMNTEESNQGSTPSDQQQNKLRSS</sequence>
<reference key="1">
    <citation type="journal article" date="1994" name="Mamm. Genome">
        <title>Cloning and characterization of human phosphatase inhibitor-2 (IPP-2) sequences.</title>
        <authorList>
            <person name="Sanseau P."/>
            <person name="Jackson A."/>
            <person name="Alderton R.P."/>
            <person name="Beck S."/>
            <person name="Senger G."/>
            <person name="Sheer D."/>
            <person name="Kelly A."/>
            <person name="Trowsdale J."/>
        </authorList>
    </citation>
    <scope>NUCLEOTIDE SEQUENCE [MRNA]</scope>
</reference>
<reference key="2">
    <citation type="journal article" date="1994" name="FEBS Lett.">
        <title>Cloning of the complete coding region for human protein phosphatase inhibitor 2 using the two hybrid system and expression of inhibitor 2 in E. coli.</title>
        <authorList>
            <person name="Helps N.R."/>
            <person name="Street A.J."/>
            <person name="Elledge S.J."/>
            <person name="Cohen P.T.W."/>
        </authorList>
    </citation>
    <scope>NUCLEOTIDE SEQUENCE [MRNA]</scope>
</reference>
<reference key="3">
    <citation type="journal article" date="1997" name="Genomics">
        <title>Genetic analysis of human type 1 protein phosphatase inhibitor 2 in insulin-resistant Pima Indians.</title>
        <authorList>
            <person name="Permana P.A."/>
            <person name="Mott D.M."/>
        </authorList>
    </citation>
    <scope>NUCLEOTIDE SEQUENCE [GENOMIC DNA]</scope>
</reference>
<reference key="4">
    <citation type="submission" date="1999-04" db="EMBL/GenBank/DDBJ databases">
        <title>Inhibitor 2 of protein phosphatase 1 is differentially expressed between the colon cancer cell lines SW480 and SW620.</title>
        <authorList>
            <person name="Croke D.T."/>
            <person name="McWilliam P.M."/>
            <person name="Parle-McDermott A."/>
            <person name="Dunican D."/>
            <person name="Tighe O."/>
        </authorList>
    </citation>
    <scope>NUCLEOTIDE SEQUENCE [MRNA]</scope>
</reference>
<reference key="5">
    <citation type="submission" date="2001-11" db="EMBL/GenBank/DDBJ databases">
        <title>Cloning of inhibitor-2 of protein phosphatase type 1 from human heart.</title>
        <authorList>
            <person name="Mishra S."/>
            <person name="Tiwari N."/>
            <person name="Sabbah H.N."/>
            <person name="Gupta R.C."/>
        </authorList>
    </citation>
    <scope>NUCLEOTIDE SEQUENCE [MRNA]</scope>
    <source>
        <tissue>Heart</tissue>
    </source>
</reference>
<reference key="6">
    <citation type="journal article" date="2004" name="Genome Res.">
        <title>The status, quality, and expansion of the NIH full-length cDNA project: the Mammalian Gene Collection (MGC).</title>
        <authorList>
            <consortium name="The MGC Project Team"/>
        </authorList>
    </citation>
    <scope>NUCLEOTIDE SEQUENCE [LARGE SCALE MRNA]</scope>
    <source>
        <tissue>Skin</tissue>
    </source>
</reference>
<reference key="7">
    <citation type="journal article" date="2003" name="Nat. Biotechnol.">
        <title>Exploring proteomes and analyzing protein processing by mass spectrometric identification of sorted N-terminal peptides.</title>
        <authorList>
            <person name="Gevaert K."/>
            <person name="Goethals M."/>
            <person name="Martens L."/>
            <person name="Van Damme J."/>
            <person name="Staes A."/>
            <person name="Thomas G.R."/>
            <person name="Vandekerckhove J."/>
        </authorList>
    </citation>
    <scope>PROTEIN SEQUENCE OF 2-33</scope>
    <source>
        <tissue>Platelet</tissue>
    </source>
</reference>
<reference key="8">
    <citation type="journal article" date="2008" name="J. Proteome Res.">
        <title>Combining protein-based IMAC, peptide-based IMAC, and MudPIT for efficient phosphoproteomic analysis.</title>
        <authorList>
            <person name="Cantin G.T."/>
            <person name="Yi W."/>
            <person name="Lu B."/>
            <person name="Park S.K."/>
            <person name="Xu T."/>
            <person name="Lee J.-D."/>
            <person name="Yates J.R. III"/>
        </authorList>
    </citation>
    <scope>PHOSPHORYLATION [LARGE SCALE ANALYSIS] AT THR-92</scope>
    <scope>IDENTIFICATION BY MASS SPECTROMETRY [LARGE SCALE ANALYSIS]</scope>
    <source>
        <tissue>Cervix carcinoma</tissue>
    </source>
</reference>
<reference key="9">
    <citation type="journal article" date="2008" name="Mol. Cell. Biol.">
        <title>A novel ATM-dependent pathway regulates protein phosphatase 1 in response to DNA damage.</title>
        <authorList>
            <person name="Tang X."/>
            <person name="Hui Z.G."/>
            <person name="Cui X.L."/>
            <person name="Garg R."/>
            <person name="Kastan M.B."/>
            <person name="Xu B."/>
        </authorList>
    </citation>
    <scope>PHOSPHORYLATION AT SER-44</scope>
    <scope>SUBUNIT</scope>
</reference>
<reference key="10">
    <citation type="journal article" date="2008" name="Proc. Natl. Acad. Sci. U.S.A.">
        <title>A quantitative atlas of mitotic phosphorylation.</title>
        <authorList>
            <person name="Dephoure N."/>
            <person name="Zhou C."/>
            <person name="Villen J."/>
            <person name="Beausoleil S.A."/>
            <person name="Bakalarski C.E."/>
            <person name="Elledge S.J."/>
            <person name="Gygi S.P."/>
        </authorList>
    </citation>
    <scope>PHOSPHORYLATION [LARGE SCALE ANALYSIS] AT SER-87 AND THR-89</scope>
    <scope>IDENTIFICATION BY MASS SPECTROMETRY [LARGE SCALE ANALYSIS]</scope>
    <source>
        <tissue>Cervix carcinoma</tissue>
    </source>
</reference>
<reference key="11">
    <citation type="journal article" date="2009" name="Sci. Signal.">
        <title>Quantitative phosphoproteomic analysis of T cell receptor signaling reveals system-wide modulation of protein-protein interactions.</title>
        <authorList>
            <person name="Mayya V."/>
            <person name="Lundgren D.H."/>
            <person name="Hwang S.-I."/>
            <person name="Rezaul K."/>
            <person name="Wu L."/>
            <person name="Eng J.K."/>
            <person name="Rodionov V."/>
            <person name="Han D.K."/>
        </authorList>
    </citation>
    <scope>PHOSPHORYLATION [LARGE SCALE ANALYSIS] AT SER-87</scope>
    <scope>IDENTIFICATION BY MASS SPECTROMETRY [LARGE SCALE ANALYSIS]</scope>
    <source>
        <tissue>Leukemic T-cell</tissue>
    </source>
</reference>
<reference key="12">
    <citation type="journal article" date="2011" name="BMC Syst. Biol.">
        <title>Initial characterization of the human central proteome.</title>
        <authorList>
            <person name="Burkard T.R."/>
            <person name="Planyavsky M."/>
            <person name="Kaupe I."/>
            <person name="Breitwieser F.P."/>
            <person name="Buerckstuemmer T."/>
            <person name="Bennett K.L."/>
            <person name="Superti-Furga G."/>
            <person name="Colinge J."/>
        </authorList>
    </citation>
    <scope>IDENTIFICATION BY MASS SPECTROMETRY [LARGE SCALE ANALYSIS]</scope>
</reference>
<reference key="13">
    <citation type="journal article" date="2013" name="BMC Cell Biol.">
        <title>Identification and characterization of two distinct PPP1R2 isoforms in human spermatozoa.</title>
        <authorList>
            <person name="Korrodi-Gregorio L."/>
            <person name="Ferreira M."/>
            <person name="Vintem A.P."/>
            <person name="Wu W."/>
            <person name="Muller T."/>
            <person name="Marcus K."/>
            <person name="Vijayaraghavan S."/>
            <person name="Brautigan D.L."/>
            <person name="da Cruz E Silva O.A."/>
            <person name="Fardilha M."/>
            <person name="da Cruz E Silva E.F."/>
        </authorList>
    </citation>
    <scope>PHOSPHORYLATION AT SER-121; SER-122 AND SER-127</scope>
    <source>
        <tissue>Testis</tissue>
    </source>
</reference>
<reference key="14">
    <citation type="journal article" date="2013" name="J. Proteome Res.">
        <title>Toward a comprehensive characterization of a human cancer cell phosphoproteome.</title>
        <authorList>
            <person name="Zhou H."/>
            <person name="Di Palma S."/>
            <person name="Preisinger C."/>
            <person name="Peng M."/>
            <person name="Polat A.N."/>
            <person name="Heck A.J."/>
            <person name="Mohammed S."/>
        </authorList>
    </citation>
    <scope>IDENTIFICATION BY MASS SPECTROMETRY [LARGE SCALE ANALYSIS]</scope>
    <source>
        <tissue>Cervix carcinoma</tissue>
        <tissue>Erythroleukemia</tissue>
    </source>
</reference>